<gene>
    <name evidence="1" type="primary">psd</name>
    <name type="ordered locus">Mfla_2122</name>
</gene>
<organism>
    <name type="scientific">Methylobacillus flagellatus (strain ATCC 51484 / DSM 6875 / VKM B-1610 / KT)</name>
    <dbReference type="NCBI Taxonomy" id="265072"/>
    <lineage>
        <taxon>Bacteria</taxon>
        <taxon>Pseudomonadati</taxon>
        <taxon>Pseudomonadota</taxon>
        <taxon>Betaproteobacteria</taxon>
        <taxon>Nitrosomonadales</taxon>
        <taxon>Methylophilaceae</taxon>
        <taxon>Methylobacillus</taxon>
    </lineage>
</organism>
<protein>
    <recommendedName>
        <fullName evidence="1">Phosphatidylserine decarboxylase proenzyme</fullName>
        <ecNumber evidence="1">4.1.1.65</ecNumber>
    </recommendedName>
    <component>
        <recommendedName>
            <fullName evidence="1">Phosphatidylserine decarboxylase alpha chain</fullName>
        </recommendedName>
    </component>
    <component>
        <recommendedName>
            <fullName evidence="1">Phosphatidylserine decarboxylase beta chain</fullName>
        </recommendedName>
    </component>
</protein>
<evidence type="ECO:0000255" key="1">
    <source>
        <dbReference type="HAMAP-Rule" id="MF_00662"/>
    </source>
</evidence>
<comment type="function">
    <text evidence="1">Catalyzes the formation of phosphatidylethanolamine (PtdEtn) from phosphatidylserine (PtdSer).</text>
</comment>
<comment type="catalytic activity">
    <reaction evidence="1">
        <text>a 1,2-diacyl-sn-glycero-3-phospho-L-serine + H(+) = a 1,2-diacyl-sn-glycero-3-phosphoethanolamine + CO2</text>
        <dbReference type="Rhea" id="RHEA:20828"/>
        <dbReference type="ChEBI" id="CHEBI:15378"/>
        <dbReference type="ChEBI" id="CHEBI:16526"/>
        <dbReference type="ChEBI" id="CHEBI:57262"/>
        <dbReference type="ChEBI" id="CHEBI:64612"/>
        <dbReference type="EC" id="4.1.1.65"/>
    </reaction>
</comment>
<comment type="cofactor">
    <cofactor evidence="1">
        <name>pyruvate</name>
        <dbReference type="ChEBI" id="CHEBI:15361"/>
    </cofactor>
    <text evidence="1">Binds 1 pyruvoyl group covalently per subunit.</text>
</comment>
<comment type="pathway">
    <text evidence="1">Phospholipid metabolism; phosphatidylethanolamine biosynthesis; phosphatidylethanolamine from CDP-diacylglycerol: step 2/2.</text>
</comment>
<comment type="subunit">
    <text evidence="1">Heterodimer of a large membrane-associated beta subunit and a small pyruvoyl-containing alpha subunit.</text>
</comment>
<comment type="subcellular location">
    <subcellularLocation>
        <location evidence="1">Cell membrane</location>
        <topology evidence="1">Peripheral membrane protein</topology>
    </subcellularLocation>
</comment>
<comment type="PTM">
    <text evidence="1">Is synthesized initially as an inactive proenzyme. Formation of the active enzyme involves a self-maturation process in which the active site pyruvoyl group is generated from an internal serine residue via an autocatalytic post-translational modification. Two non-identical subunits are generated from the proenzyme in this reaction, and the pyruvate is formed at the N-terminus of the alpha chain, which is derived from the carboxyl end of the proenzyme. The autoendoproteolytic cleavage occurs by a canonical serine protease mechanism, in which the side chain hydroxyl group of the serine supplies its oxygen atom to form the C-terminus of the beta chain, while the remainder of the serine residue undergoes an oxidative deamination to produce ammonia and the pyruvoyl prosthetic group on the alpha chain. During this reaction, the Ser that is part of the protease active site of the proenzyme becomes the pyruvoyl prosthetic group, which constitutes an essential element of the active site of the mature decarboxylase.</text>
</comment>
<comment type="similarity">
    <text evidence="1">Belongs to the phosphatidylserine decarboxylase family. PSD-B subfamily. Prokaryotic type I sub-subfamily.</text>
</comment>
<proteinExistence type="inferred from homology"/>
<keyword id="KW-1003">Cell membrane</keyword>
<keyword id="KW-0210">Decarboxylase</keyword>
<keyword id="KW-0444">Lipid biosynthesis</keyword>
<keyword id="KW-0443">Lipid metabolism</keyword>
<keyword id="KW-0456">Lyase</keyword>
<keyword id="KW-0472">Membrane</keyword>
<keyword id="KW-0594">Phospholipid biosynthesis</keyword>
<keyword id="KW-1208">Phospholipid metabolism</keyword>
<keyword id="KW-0670">Pyruvate</keyword>
<keyword id="KW-1185">Reference proteome</keyword>
<keyword id="KW-0865">Zymogen</keyword>
<dbReference type="EC" id="4.1.1.65" evidence="1"/>
<dbReference type="EMBL" id="CP000284">
    <property type="protein sequence ID" value="ABE50389.1"/>
    <property type="molecule type" value="Genomic_DNA"/>
</dbReference>
<dbReference type="RefSeq" id="WP_011480343.1">
    <property type="nucleotide sequence ID" value="NC_007947.1"/>
</dbReference>
<dbReference type="SMR" id="Q1GZE8"/>
<dbReference type="STRING" id="265072.Mfla_2122"/>
<dbReference type="KEGG" id="mfa:Mfla_2122"/>
<dbReference type="eggNOG" id="COG0688">
    <property type="taxonomic scope" value="Bacteria"/>
</dbReference>
<dbReference type="HOGENOM" id="CLU_029061_4_1_4"/>
<dbReference type="OrthoDB" id="9802030at2"/>
<dbReference type="UniPathway" id="UPA00558">
    <property type="reaction ID" value="UER00616"/>
</dbReference>
<dbReference type="Proteomes" id="UP000002440">
    <property type="component" value="Chromosome"/>
</dbReference>
<dbReference type="GO" id="GO:0005886">
    <property type="term" value="C:plasma membrane"/>
    <property type="evidence" value="ECO:0007669"/>
    <property type="project" value="UniProtKB-SubCell"/>
</dbReference>
<dbReference type="GO" id="GO:0004609">
    <property type="term" value="F:phosphatidylserine decarboxylase activity"/>
    <property type="evidence" value="ECO:0007669"/>
    <property type="project" value="UniProtKB-UniRule"/>
</dbReference>
<dbReference type="GO" id="GO:0006646">
    <property type="term" value="P:phosphatidylethanolamine biosynthetic process"/>
    <property type="evidence" value="ECO:0007669"/>
    <property type="project" value="UniProtKB-UniRule"/>
</dbReference>
<dbReference type="HAMAP" id="MF_00662">
    <property type="entry name" value="PS_decarb_PSD_B_type1"/>
    <property type="match status" value="1"/>
</dbReference>
<dbReference type="InterPro" id="IPR003817">
    <property type="entry name" value="PS_Dcarbxylase"/>
</dbReference>
<dbReference type="InterPro" id="IPR033177">
    <property type="entry name" value="PSD-B"/>
</dbReference>
<dbReference type="InterPro" id="IPR033178">
    <property type="entry name" value="PSD_type1_pro"/>
</dbReference>
<dbReference type="NCBIfam" id="TIGR00163">
    <property type="entry name" value="PS_decarb"/>
    <property type="match status" value="1"/>
</dbReference>
<dbReference type="PANTHER" id="PTHR10067">
    <property type="entry name" value="PHOSPHATIDYLSERINE DECARBOXYLASE"/>
    <property type="match status" value="1"/>
</dbReference>
<dbReference type="PANTHER" id="PTHR10067:SF6">
    <property type="entry name" value="PHOSPHATIDYLSERINE DECARBOXYLASE PROENZYME, MITOCHONDRIAL"/>
    <property type="match status" value="1"/>
</dbReference>
<dbReference type="Pfam" id="PF02666">
    <property type="entry name" value="PS_Dcarbxylase"/>
    <property type="match status" value="1"/>
</dbReference>
<accession>Q1GZE8</accession>
<name>PSD_METFK</name>
<feature type="chain" id="PRO_0000262123" description="Phosphatidylserine decarboxylase beta chain" evidence="1">
    <location>
        <begin position="1"/>
        <end position="247"/>
    </location>
</feature>
<feature type="chain" id="PRO_0000262124" description="Phosphatidylserine decarboxylase alpha chain" evidence="1">
    <location>
        <begin position="248"/>
        <end position="280"/>
    </location>
</feature>
<feature type="active site" description="Charge relay system; for autoendoproteolytic cleavage activity" evidence="1">
    <location>
        <position position="88"/>
    </location>
</feature>
<feature type="active site" description="Charge relay system; for autoendoproteolytic cleavage activity" evidence="1">
    <location>
        <position position="145"/>
    </location>
</feature>
<feature type="active site" description="Charge relay system; for autoendoproteolytic cleavage activity" evidence="1">
    <location>
        <position position="248"/>
    </location>
</feature>
<feature type="active site" description="Schiff-base intermediate with substrate; via pyruvic acid; for decarboxylase activity" evidence="1">
    <location>
        <position position="248"/>
    </location>
</feature>
<feature type="site" description="Cleavage (non-hydrolytic); by autocatalysis" evidence="1">
    <location>
        <begin position="247"/>
        <end position="248"/>
    </location>
</feature>
<feature type="modified residue" description="Pyruvic acid (Ser); by autocatalysis" evidence="1">
    <location>
        <position position="248"/>
    </location>
</feature>
<reference key="1">
    <citation type="submission" date="2006-03" db="EMBL/GenBank/DDBJ databases">
        <title>Complete sequence of Methylobacillus flagellatus KT.</title>
        <authorList>
            <consortium name="US DOE Joint Genome Institute"/>
            <person name="Copeland A."/>
            <person name="Lucas S."/>
            <person name="Lapidus A."/>
            <person name="Barry K."/>
            <person name="Detter J.C."/>
            <person name="Glavina del Rio T."/>
            <person name="Hammon N."/>
            <person name="Israni S."/>
            <person name="Dalin E."/>
            <person name="Tice H."/>
            <person name="Pitluck S."/>
            <person name="Brettin T."/>
            <person name="Bruce D."/>
            <person name="Han C."/>
            <person name="Tapia R."/>
            <person name="Saunders E."/>
            <person name="Gilna P."/>
            <person name="Schmutz J."/>
            <person name="Larimer F."/>
            <person name="Land M."/>
            <person name="Kyrpides N."/>
            <person name="Anderson I."/>
            <person name="Richardson P."/>
        </authorList>
    </citation>
    <scope>NUCLEOTIDE SEQUENCE [LARGE SCALE GENOMIC DNA]</scope>
    <source>
        <strain>ATCC 51484 / DSM 6875 / VKM B-1610 / KT</strain>
    </source>
</reference>
<sequence>MPKPYSVKLQYLVPKIALTALAGKLAHLRAGWLTTTVIRWFAKHYRVNMLEAVNPDITSYASFNDFFTRALKPGARPLADAAQLCPVDGAISQFGRIDKDQIFQAKGHHYSTTALLAGNAQMAREYENGYFATIYLSPRDYHRIHMPCDGKLLSMTYVPGDLFSVNPLTAEHVPGLFARNERVVCEFANSEGKFALVLVGATIVGSMATVWHGIVNPPRRGEIQTWHYHDQDIRLKQGEEMGRFLLGSTVVVLYPETAQLRFQPGWHPLRAVSLGEAMAQ</sequence>